<name>RIO1_SCHPO</name>
<sequence length="497" mass="57498">MVEELKNDAQTNEEESEYSDFSDGSDNDYFREDDIDWNQASSNYSARQENFGNNSSKINSVNDHVSTLSRYVNNIKLNDRFEAEDKSSIKDKSDRATSEQVLDPRTRMILLKLINNGTISEINGCISTGKEANVYHATNEDGKHFAIKIYKTSILVFKDRDRYVSGEFRFRHGYNKRNPRKMVRLWAEKEIRNLKRVAAAGIPCPEPILLKQHVLLMSFLGDKKGWAYPKLKDIDMTPGEATKLYQLVARNMRILFHVCHLVHADLSEYNLLYHKGKVYFIDVSQSVEHDHPQSIDFLRMDILNISTFFRRLNAGCLSLPQLFKFITEEGSCEKEAMKTRLNAIYEEEPTTEEYEEEFLKTYVPRTLDEVYDIDRDTEIVNAGGVNSLVYKHLLNTDFQKLDLNDTTKNQNDQILPNETSESDDDANSISSMENEEERTSDSKSSAKQGKGNGRAKETPEEKRARKKKTKEDKAEKRKSKIPKYEKKRKLKQSGRKK</sequence>
<gene>
    <name type="primary">rio1</name>
    <name type="ORF">SPAC10F6.10</name>
</gene>
<comment type="function">
    <text evidence="1 2">Required for the final endonucleolytic cleavage at site D converting 20S pre-rRNA into the mature 18S rRNA. Required for the final steps of cytoplasmic maturation of the 40S ribosomal subunit. Despite the protein kinase domain is proposed to act predominantly as an ATPase (By similarity).</text>
</comment>
<comment type="catalytic activity">
    <reaction>
        <text>L-seryl-[protein] + ATP = O-phospho-L-seryl-[protein] + ADP + H(+)</text>
        <dbReference type="Rhea" id="RHEA:17989"/>
        <dbReference type="Rhea" id="RHEA-COMP:9863"/>
        <dbReference type="Rhea" id="RHEA-COMP:11604"/>
        <dbReference type="ChEBI" id="CHEBI:15378"/>
        <dbReference type="ChEBI" id="CHEBI:29999"/>
        <dbReference type="ChEBI" id="CHEBI:30616"/>
        <dbReference type="ChEBI" id="CHEBI:83421"/>
        <dbReference type="ChEBI" id="CHEBI:456216"/>
        <dbReference type="EC" id="2.7.11.1"/>
    </reaction>
</comment>
<comment type="catalytic activity">
    <reaction>
        <text>L-threonyl-[protein] + ATP = O-phospho-L-threonyl-[protein] + ADP + H(+)</text>
        <dbReference type="Rhea" id="RHEA:46608"/>
        <dbReference type="Rhea" id="RHEA-COMP:11060"/>
        <dbReference type="Rhea" id="RHEA-COMP:11605"/>
        <dbReference type="ChEBI" id="CHEBI:15378"/>
        <dbReference type="ChEBI" id="CHEBI:30013"/>
        <dbReference type="ChEBI" id="CHEBI:30616"/>
        <dbReference type="ChEBI" id="CHEBI:61977"/>
        <dbReference type="ChEBI" id="CHEBI:456216"/>
        <dbReference type="EC" id="2.7.11.1"/>
    </reaction>
</comment>
<comment type="catalytic activity">
    <reaction evidence="1">
        <text>ATP + H2O = ADP + phosphate + H(+)</text>
        <dbReference type="Rhea" id="RHEA:13065"/>
        <dbReference type="ChEBI" id="CHEBI:15377"/>
        <dbReference type="ChEBI" id="CHEBI:15378"/>
        <dbReference type="ChEBI" id="CHEBI:30616"/>
        <dbReference type="ChEBI" id="CHEBI:43474"/>
        <dbReference type="ChEBI" id="CHEBI:456216"/>
    </reaction>
</comment>
<comment type="cofactor">
    <cofactor evidence="7">
        <name>Mg(2+)</name>
        <dbReference type="ChEBI" id="CHEBI:18420"/>
    </cofactor>
</comment>
<comment type="subcellular location">
    <subcellularLocation>
        <location evidence="6">Cytoplasm</location>
    </subcellularLocation>
</comment>
<comment type="similarity">
    <text evidence="7">Belongs to the protein kinase superfamily. RIO-type Ser/Thr kinase family.</text>
</comment>
<reference key="1">
    <citation type="journal article" date="2002" name="Nature">
        <title>The genome sequence of Schizosaccharomyces pombe.</title>
        <authorList>
            <person name="Wood V."/>
            <person name="Gwilliam R."/>
            <person name="Rajandream M.A."/>
            <person name="Lyne M.H."/>
            <person name="Lyne R."/>
            <person name="Stewart A."/>
            <person name="Sgouros J.G."/>
            <person name="Peat N."/>
            <person name="Hayles J."/>
            <person name="Baker S.G."/>
            <person name="Basham D."/>
            <person name="Bowman S."/>
            <person name="Brooks K."/>
            <person name="Brown D."/>
            <person name="Brown S."/>
            <person name="Chillingworth T."/>
            <person name="Churcher C.M."/>
            <person name="Collins M."/>
            <person name="Connor R."/>
            <person name="Cronin A."/>
            <person name="Davis P."/>
            <person name="Feltwell T."/>
            <person name="Fraser A."/>
            <person name="Gentles S."/>
            <person name="Goble A."/>
            <person name="Hamlin N."/>
            <person name="Harris D.E."/>
            <person name="Hidalgo J."/>
            <person name="Hodgson G."/>
            <person name="Holroyd S."/>
            <person name="Hornsby T."/>
            <person name="Howarth S."/>
            <person name="Huckle E.J."/>
            <person name="Hunt S."/>
            <person name="Jagels K."/>
            <person name="James K.D."/>
            <person name="Jones L."/>
            <person name="Jones M."/>
            <person name="Leather S."/>
            <person name="McDonald S."/>
            <person name="McLean J."/>
            <person name="Mooney P."/>
            <person name="Moule S."/>
            <person name="Mungall K.L."/>
            <person name="Murphy L.D."/>
            <person name="Niblett D."/>
            <person name="Odell C."/>
            <person name="Oliver K."/>
            <person name="O'Neil S."/>
            <person name="Pearson D."/>
            <person name="Quail M.A."/>
            <person name="Rabbinowitsch E."/>
            <person name="Rutherford K.M."/>
            <person name="Rutter S."/>
            <person name="Saunders D."/>
            <person name="Seeger K."/>
            <person name="Sharp S."/>
            <person name="Skelton J."/>
            <person name="Simmonds M.N."/>
            <person name="Squares R."/>
            <person name="Squares S."/>
            <person name="Stevens K."/>
            <person name="Taylor K."/>
            <person name="Taylor R.G."/>
            <person name="Tivey A."/>
            <person name="Walsh S.V."/>
            <person name="Warren T."/>
            <person name="Whitehead S."/>
            <person name="Woodward J.R."/>
            <person name="Volckaert G."/>
            <person name="Aert R."/>
            <person name="Robben J."/>
            <person name="Grymonprez B."/>
            <person name="Weltjens I."/>
            <person name="Vanstreels E."/>
            <person name="Rieger M."/>
            <person name="Schaefer M."/>
            <person name="Mueller-Auer S."/>
            <person name="Gabel C."/>
            <person name="Fuchs M."/>
            <person name="Duesterhoeft A."/>
            <person name="Fritzc C."/>
            <person name="Holzer E."/>
            <person name="Moestl D."/>
            <person name="Hilbert H."/>
            <person name="Borzym K."/>
            <person name="Langer I."/>
            <person name="Beck A."/>
            <person name="Lehrach H."/>
            <person name="Reinhardt R."/>
            <person name="Pohl T.M."/>
            <person name="Eger P."/>
            <person name="Zimmermann W."/>
            <person name="Wedler H."/>
            <person name="Wambutt R."/>
            <person name="Purnelle B."/>
            <person name="Goffeau A."/>
            <person name="Cadieu E."/>
            <person name="Dreano S."/>
            <person name="Gloux S."/>
            <person name="Lelaure V."/>
            <person name="Mottier S."/>
            <person name="Galibert F."/>
            <person name="Aves S.J."/>
            <person name="Xiang Z."/>
            <person name="Hunt C."/>
            <person name="Moore K."/>
            <person name="Hurst S.M."/>
            <person name="Lucas M."/>
            <person name="Rochet M."/>
            <person name="Gaillardin C."/>
            <person name="Tallada V.A."/>
            <person name="Garzon A."/>
            <person name="Thode G."/>
            <person name="Daga R.R."/>
            <person name="Cruzado L."/>
            <person name="Jimenez J."/>
            <person name="Sanchez M."/>
            <person name="del Rey F."/>
            <person name="Benito J."/>
            <person name="Dominguez A."/>
            <person name="Revuelta J.L."/>
            <person name="Moreno S."/>
            <person name="Armstrong J."/>
            <person name="Forsburg S.L."/>
            <person name="Cerutti L."/>
            <person name="Lowe T."/>
            <person name="McCombie W.R."/>
            <person name="Paulsen I."/>
            <person name="Potashkin J."/>
            <person name="Shpakovski G.V."/>
            <person name="Ussery D."/>
            <person name="Barrell B.G."/>
            <person name="Nurse P."/>
        </authorList>
    </citation>
    <scope>NUCLEOTIDE SEQUENCE [LARGE SCALE GENOMIC DNA]</scope>
    <source>
        <strain>972 / ATCC 24843</strain>
    </source>
</reference>
<reference key="2">
    <citation type="journal article" date="2011" name="Science">
        <title>Comparative functional genomics of the fission yeasts.</title>
        <authorList>
            <person name="Rhind N."/>
            <person name="Chen Z."/>
            <person name="Yassour M."/>
            <person name="Thompson D.A."/>
            <person name="Haas B.J."/>
            <person name="Habib N."/>
            <person name="Wapinski I."/>
            <person name="Roy S."/>
            <person name="Lin M.F."/>
            <person name="Heiman D.I."/>
            <person name="Young S.K."/>
            <person name="Furuya K."/>
            <person name="Guo Y."/>
            <person name="Pidoux A."/>
            <person name="Chen H.M."/>
            <person name="Robbertse B."/>
            <person name="Goldberg J.M."/>
            <person name="Aoki K."/>
            <person name="Bayne E.H."/>
            <person name="Berlin A.M."/>
            <person name="Desjardins C.A."/>
            <person name="Dobbs E."/>
            <person name="Dukaj L."/>
            <person name="Fan L."/>
            <person name="FitzGerald M.G."/>
            <person name="French C."/>
            <person name="Gujja S."/>
            <person name="Hansen K."/>
            <person name="Keifenheim D."/>
            <person name="Levin J.Z."/>
            <person name="Mosher R.A."/>
            <person name="Mueller C.A."/>
            <person name="Pfiffner J."/>
            <person name="Priest M."/>
            <person name="Russ C."/>
            <person name="Smialowska A."/>
            <person name="Swoboda P."/>
            <person name="Sykes S.M."/>
            <person name="Vaughn M."/>
            <person name="Vengrova S."/>
            <person name="Yoder R."/>
            <person name="Zeng Q."/>
            <person name="Allshire R."/>
            <person name="Baulcombe D."/>
            <person name="Birren B.W."/>
            <person name="Brown W."/>
            <person name="Ekwall K."/>
            <person name="Kellis M."/>
            <person name="Leatherwood J."/>
            <person name="Levin H."/>
            <person name="Margalit H."/>
            <person name="Martienssen R."/>
            <person name="Nieduszynski C.A."/>
            <person name="Spatafora J.W."/>
            <person name="Friedman N."/>
            <person name="Dalgaard J.Z."/>
            <person name="Baumann P."/>
            <person name="Niki H."/>
            <person name="Regev A."/>
            <person name="Nusbaum C."/>
        </authorList>
    </citation>
    <scope>REVISION OF GENE MODEL</scope>
</reference>
<reference key="3">
    <citation type="journal article" date="2006" name="Nat. Biotechnol.">
        <title>ORFeome cloning and global analysis of protein localization in the fission yeast Schizosaccharomyces pombe.</title>
        <authorList>
            <person name="Matsuyama A."/>
            <person name="Arai R."/>
            <person name="Yashiroda Y."/>
            <person name="Shirai A."/>
            <person name="Kamata A."/>
            <person name="Sekido S."/>
            <person name="Kobayashi Y."/>
            <person name="Hashimoto A."/>
            <person name="Hamamoto M."/>
            <person name="Hiraoka Y."/>
            <person name="Horinouchi S."/>
            <person name="Yoshida M."/>
        </authorList>
    </citation>
    <scope>SUBCELLULAR LOCATION [LARGE SCALE ANALYSIS]</scope>
</reference>
<keyword id="KW-0067">ATP-binding</keyword>
<keyword id="KW-0963">Cytoplasm</keyword>
<keyword id="KW-0378">Hydrolase</keyword>
<keyword id="KW-0418">Kinase</keyword>
<keyword id="KW-0460">Magnesium</keyword>
<keyword id="KW-0479">Metal-binding</keyword>
<keyword id="KW-0547">Nucleotide-binding</keyword>
<keyword id="KW-1185">Reference proteome</keyword>
<keyword id="KW-0690">Ribosome biogenesis</keyword>
<keyword id="KW-0723">Serine/threonine-protein kinase</keyword>
<keyword id="KW-0808">Transferase</keyword>
<feature type="chain" id="PRO_0000317085" description="Serine/threonine-protein kinase rio1">
    <location>
        <begin position="1"/>
        <end position="497"/>
    </location>
</feature>
<feature type="domain" description="Protein kinase">
    <location>
        <begin position="120"/>
        <end position="415"/>
    </location>
</feature>
<feature type="region of interest" description="Disordered" evidence="5">
    <location>
        <begin position="1"/>
        <end position="35"/>
    </location>
</feature>
<feature type="region of interest" description="Disordered" evidence="5">
    <location>
        <begin position="407"/>
        <end position="497"/>
    </location>
</feature>
<feature type="compositionally biased region" description="Acidic residues" evidence="5">
    <location>
        <begin position="11"/>
        <end position="35"/>
    </location>
</feature>
<feature type="compositionally biased region" description="Polar residues" evidence="5">
    <location>
        <begin position="407"/>
        <end position="419"/>
    </location>
</feature>
<feature type="compositionally biased region" description="Basic and acidic residues" evidence="5">
    <location>
        <begin position="454"/>
        <end position="475"/>
    </location>
</feature>
<feature type="compositionally biased region" description="Basic residues" evidence="5">
    <location>
        <begin position="476"/>
        <end position="497"/>
    </location>
</feature>
<feature type="active site" description="Proton acceptor" evidence="3 4">
    <location>
        <position position="265"/>
    </location>
</feature>
<feature type="active site" description="4-aspartylphosphate intermediate" evidence="3">
    <location>
        <position position="282"/>
    </location>
</feature>
<feature type="binding site" evidence="3">
    <location>
        <position position="148"/>
    </location>
    <ligand>
        <name>ATP</name>
        <dbReference type="ChEBI" id="CHEBI:30616"/>
    </ligand>
</feature>
<feature type="binding site" evidence="3">
    <location>
        <position position="220"/>
    </location>
    <ligand>
        <name>ATP</name>
        <dbReference type="ChEBI" id="CHEBI:30616"/>
    </ligand>
</feature>
<feature type="binding site" evidence="3">
    <location>
        <position position="270"/>
    </location>
    <ligand>
        <name>Mg(2+)</name>
        <dbReference type="ChEBI" id="CHEBI:18420"/>
    </ligand>
</feature>
<feature type="binding site" evidence="3">
    <location>
        <position position="282"/>
    </location>
    <ligand>
        <name>Mg(2+)</name>
        <dbReference type="ChEBI" id="CHEBI:18420"/>
    </ligand>
</feature>
<proteinExistence type="inferred from homology"/>
<accession>O42650</accession>
<organism>
    <name type="scientific">Schizosaccharomyces pombe (strain 972 / ATCC 24843)</name>
    <name type="common">Fission yeast</name>
    <dbReference type="NCBI Taxonomy" id="284812"/>
    <lineage>
        <taxon>Eukaryota</taxon>
        <taxon>Fungi</taxon>
        <taxon>Dikarya</taxon>
        <taxon>Ascomycota</taxon>
        <taxon>Taphrinomycotina</taxon>
        <taxon>Schizosaccharomycetes</taxon>
        <taxon>Schizosaccharomycetales</taxon>
        <taxon>Schizosaccharomycetaceae</taxon>
        <taxon>Schizosaccharomyces</taxon>
    </lineage>
</organism>
<protein>
    <recommendedName>
        <fullName>Serine/threonine-protein kinase rio1</fullName>
        <ecNumber>2.7.11.1</ecNumber>
        <ecNumber evidence="1">3.6.1.-</ecNumber>
    </recommendedName>
</protein>
<evidence type="ECO:0000250" key="1">
    <source>
        <dbReference type="UniProtKB" id="G0S3J5"/>
    </source>
</evidence>
<evidence type="ECO:0000250" key="2">
    <source>
        <dbReference type="UniProtKB" id="Q12196"/>
    </source>
</evidence>
<evidence type="ECO:0000250" key="3">
    <source>
        <dbReference type="UniProtKB" id="Q9BRS2"/>
    </source>
</evidence>
<evidence type="ECO:0000255" key="4">
    <source>
        <dbReference type="PROSITE-ProRule" id="PRU10028"/>
    </source>
</evidence>
<evidence type="ECO:0000256" key="5">
    <source>
        <dbReference type="SAM" id="MobiDB-lite"/>
    </source>
</evidence>
<evidence type="ECO:0000269" key="6">
    <source>
    </source>
</evidence>
<evidence type="ECO:0000305" key="7"/>
<dbReference type="EC" id="2.7.11.1"/>
<dbReference type="EC" id="3.6.1.-" evidence="1"/>
<dbReference type="EMBL" id="CU329670">
    <property type="protein sequence ID" value="CAA15723.2"/>
    <property type="molecule type" value="Genomic_DNA"/>
</dbReference>
<dbReference type="PIR" id="T37504">
    <property type="entry name" value="T37504"/>
</dbReference>
<dbReference type="RefSeq" id="NP_593261.2">
    <property type="nucleotide sequence ID" value="NM_001018658.2"/>
</dbReference>
<dbReference type="SMR" id="O42650"/>
<dbReference type="FunCoup" id="O42650">
    <property type="interactions" value="954"/>
</dbReference>
<dbReference type="STRING" id="284812.O42650"/>
<dbReference type="PaxDb" id="4896-SPAC10F6.10.1"/>
<dbReference type="EnsemblFungi" id="SPAC10F6.10.1">
    <property type="protein sequence ID" value="SPAC10F6.10.1:pep"/>
    <property type="gene ID" value="SPAC10F6.10"/>
</dbReference>
<dbReference type="GeneID" id="2542923"/>
<dbReference type="KEGG" id="spo:2542923"/>
<dbReference type="PomBase" id="SPAC10F6.10">
    <property type="gene designation" value="rio1"/>
</dbReference>
<dbReference type="VEuPathDB" id="FungiDB:SPAC10F6.10"/>
<dbReference type="eggNOG" id="KOG2270">
    <property type="taxonomic scope" value="Eukaryota"/>
</dbReference>
<dbReference type="HOGENOM" id="CLU_018693_4_0_1"/>
<dbReference type="InParanoid" id="O42650"/>
<dbReference type="OMA" id="HPMSLDF"/>
<dbReference type="PRO" id="PR:O42650"/>
<dbReference type="Proteomes" id="UP000002485">
    <property type="component" value="Chromosome I"/>
</dbReference>
<dbReference type="GO" id="GO:0005829">
    <property type="term" value="C:cytosol"/>
    <property type="evidence" value="ECO:0007005"/>
    <property type="project" value="PomBase"/>
</dbReference>
<dbReference type="GO" id="GO:0005634">
    <property type="term" value="C:nucleus"/>
    <property type="evidence" value="ECO:0000266"/>
    <property type="project" value="PomBase"/>
</dbReference>
<dbReference type="GO" id="GO:0030688">
    <property type="term" value="C:preribosome, small subunit precursor"/>
    <property type="evidence" value="ECO:0000318"/>
    <property type="project" value="GO_Central"/>
</dbReference>
<dbReference type="GO" id="GO:0005524">
    <property type="term" value="F:ATP binding"/>
    <property type="evidence" value="ECO:0007669"/>
    <property type="project" value="UniProtKB-KW"/>
</dbReference>
<dbReference type="GO" id="GO:0016787">
    <property type="term" value="F:hydrolase activity"/>
    <property type="evidence" value="ECO:0007669"/>
    <property type="project" value="UniProtKB-KW"/>
</dbReference>
<dbReference type="GO" id="GO:0046872">
    <property type="term" value="F:metal ion binding"/>
    <property type="evidence" value="ECO:0007669"/>
    <property type="project" value="UniProtKB-KW"/>
</dbReference>
<dbReference type="GO" id="GO:0106310">
    <property type="term" value="F:protein serine kinase activity"/>
    <property type="evidence" value="ECO:0007669"/>
    <property type="project" value="RHEA"/>
</dbReference>
<dbReference type="GO" id="GO:0004674">
    <property type="term" value="F:protein serine/threonine kinase activity"/>
    <property type="evidence" value="ECO:0000318"/>
    <property type="project" value="GO_Central"/>
</dbReference>
<dbReference type="GO" id="GO:0030490">
    <property type="term" value="P:maturation of SSU-rRNA"/>
    <property type="evidence" value="ECO:0000318"/>
    <property type="project" value="GO_Central"/>
</dbReference>
<dbReference type="GO" id="GO:0000462">
    <property type="term" value="P:maturation of SSU-rRNA from tricistronic rRNA transcript (SSU-rRNA, 5.8S rRNA, LSU-rRNA)"/>
    <property type="evidence" value="ECO:0000266"/>
    <property type="project" value="PomBase"/>
</dbReference>
<dbReference type="CDD" id="cd05147">
    <property type="entry name" value="RIO1_euk"/>
    <property type="match status" value="1"/>
</dbReference>
<dbReference type="FunFam" id="1.10.510.10:FF:000755">
    <property type="entry name" value="Homoserine kinase"/>
    <property type="match status" value="1"/>
</dbReference>
<dbReference type="FunFam" id="3.30.200.20:FF:000148">
    <property type="entry name" value="Serine/threonine-protein kinase RIO1"/>
    <property type="match status" value="1"/>
</dbReference>
<dbReference type="Gene3D" id="3.30.200.20">
    <property type="entry name" value="Phosphorylase Kinase, domain 1"/>
    <property type="match status" value="1"/>
</dbReference>
<dbReference type="Gene3D" id="1.10.510.10">
    <property type="entry name" value="Transferase(Phosphotransferase) domain 1"/>
    <property type="match status" value="1"/>
</dbReference>
<dbReference type="InterPro" id="IPR011009">
    <property type="entry name" value="Kinase-like_dom_sf"/>
</dbReference>
<dbReference type="InterPro" id="IPR051272">
    <property type="entry name" value="RIO-type_Ser/Thr_kinase"/>
</dbReference>
<dbReference type="InterPro" id="IPR018934">
    <property type="entry name" value="RIO_dom"/>
</dbReference>
<dbReference type="InterPro" id="IPR000687">
    <property type="entry name" value="RIO_kinase"/>
</dbReference>
<dbReference type="InterPro" id="IPR018935">
    <property type="entry name" value="RIO_kinase_CS"/>
</dbReference>
<dbReference type="InterPro" id="IPR017407">
    <property type="entry name" value="Ser/Thr_kinase_Rio1"/>
</dbReference>
<dbReference type="PANTHER" id="PTHR45723">
    <property type="entry name" value="SERINE/THREONINE-PROTEIN KINASE RIO1"/>
    <property type="match status" value="1"/>
</dbReference>
<dbReference type="Pfam" id="PF01163">
    <property type="entry name" value="RIO1"/>
    <property type="match status" value="1"/>
</dbReference>
<dbReference type="PIRSF" id="PIRSF038147">
    <property type="entry name" value="Ser/Thr_PK_RIO1"/>
    <property type="match status" value="1"/>
</dbReference>
<dbReference type="SMART" id="SM00090">
    <property type="entry name" value="RIO"/>
    <property type="match status" value="1"/>
</dbReference>
<dbReference type="SUPFAM" id="SSF56112">
    <property type="entry name" value="Protein kinase-like (PK-like)"/>
    <property type="match status" value="1"/>
</dbReference>
<dbReference type="PROSITE" id="PS00109">
    <property type="entry name" value="PROTEIN_KINASE_TYR"/>
    <property type="match status" value="1"/>
</dbReference>
<dbReference type="PROSITE" id="PS01245">
    <property type="entry name" value="RIO1"/>
    <property type="match status" value="1"/>
</dbReference>